<sequence length="366" mass="40941">MPLTKYKAAAVTSEPCWFDLTAGVQKTIDFINEAGAAGCKLVAFPEVWIPGYPYWMWKVNYQQSLPLLKKYRENSLPIDSEEFRKIRRAARDNQIHVSLGFSEIDHATCYLTQTLIDPTGEVINHRRKIKPTHVEKLVYGDGAGDTFKSVTQTELGRLGQLNCWENMNPFLKALNVSEGEQIHIAAWPVYPGKETLNYPDPATNVAEPASDLVTPAYAIETGTWTLAPFQRLSKEGLKINTPEGIEPETDPSTYNGHARIYRPDGSLYAKPDKDFDGLMFVDIDLNECQLTKALADFSGHYMRPDLIRLLVDTRRKELVTEADPHGGITSYSTRQRLGLDVLLDSDVQKQKKSGASDLGATNALAY</sequence>
<accession>E3RV84</accession>
<accession>A0A0P1DJ02</accession>
<organism>
    <name type="scientific">Pyrenophora teres f. teres (strain 0-1)</name>
    <name type="common">Barley net blotch fungus</name>
    <name type="synonym">Drechslera teres f. teres</name>
    <dbReference type="NCBI Taxonomy" id="861557"/>
    <lineage>
        <taxon>Eukaryota</taxon>
        <taxon>Fungi</taxon>
        <taxon>Dikarya</taxon>
        <taxon>Ascomycota</taxon>
        <taxon>Pezizomycotina</taxon>
        <taxon>Dothideomycetes</taxon>
        <taxon>Pleosporomycetidae</taxon>
        <taxon>Pleosporales</taxon>
        <taxon>Pleosporineae</taxon>
        <taxon>Pleosporaceae</taxon>
        <taxon>Pyrenophora</taxon>
    </lineage>
</organism>
<comment type="function">
    <text evidence="1 3">Catalyzes the hydration of cyanide to formamide. Degradation of cyanide may be important for plant pathogenic fungi in infection of cyanogenic plants (By similarity) (PubMed:26521240). Can also transform some nitriles like 2-cyanopyridine and fumaronitrile (PubMed:26521240).</text>
</comment>
<comment type="catalytic activity">
    <reaction evidence="1 3">
        <text>formamide = hydrogen cyanide + H2O</text>
        <dbReference type="Rhea" id="RHEA:21720"/>
        <dbReference type="ChEBI" id="CHEBI:15377"/>
        <dbReference type="ChEBI" id="CHEBI:16397"/>
        <dbReference type="ChEBI" id="CHEBI:18407"/>
        <dbReference type="EC" id="4.2.1.66"/>
    </reaction>
</comment>
<comment type="subunit">
    <text evidence="1">Oligomer of dimers, forming left-handed helical fibers.</text>
</comment>
<comment type="induction">
    <text evidence="1">By cyanide.</text>
</comment>
<comment type="similarity">
    <text evidence="1">Belongs to the carbon-nitrogen hydrolase superfamily. Nitrilase family.</text>
</comment>
<dbReference type="EC" id="4.2.1.66" evidence="1 3"/>
<dbReference type="EMBL" id="LN875502">
    <property type="protein sequence ID" value="CTQ87268.1"/>
    <property type="molecule type" value="Genomic_DNA"/>
</dbReference>
<dbReference type="EMBL" id="GL535250">
    <property type="protein sequence ID" value="EFQ90364.1"/>
    <property type="molecule type" value="Genomic_DNA"/>
</dbReference>
<dbReference type="RefSeq" id="XP_003301539.1">
    <property type="nucleotide sequence ID" value="XM_003301491.1"/>
</dbReference>
<dbReference type="SMR" id="E3RV84"/>
<dbReference type="STRING" id="861557.E3RV84"/>
<dbReference type="EnsemblFungi" id="EFQ90364">
    <property type="protein sequence ID" value="EFQ90364"/>
    <property type="gene ID" value="PTT_13066"/>
</dbReference>
<dbReference type="KEGG" id="pte:PTT_13066"/>
<dbReference type="eggNOG" id="KOG0805">
    <property type="taxonomic scope" value="Eukaryota"/>
</dbReference>
<dbReference type="HOGENOM" id="CLU_030130_6_0_1"/>
<dbReference type="OrthoDB" id="10250282at2759"/>
<dbReference type="Proteomes" id="UP000001067">
    <property type="component" value="Unassembled WGS sequence"/>
</dbReference>
<dbReference type="GO" id="GO:0030196">
    <property type="term" value="F:cyanide hydratase activity"/>
    <property type="evidence" value="ECO:0007669"/>
    <property type="project" value="UniProtKB-UniRule"/>
</dbReference>
<dbReference type="GO" id="GO:0000257">
    <property type="term" value="F:nitrilase activity"/>
    <property type="evidence" value="ECO:0007669"/>
    <property type="project" value="UniProtKB-ARBA"/>
</dbReference>
<dbReference type="GO" id="GO:0019500">
    <property type="term" value="P:cyanide catabolic process"/>
    <property type="evidence" value="ECO:0007669"/>
    <property type="project" value="UniProtKB-UniRule"/>
</dbReference>
<dbReference type="CDD" id="cd07564">
    <property type="entry name" value="nitrilases_CHs"/>
    <property type="match status" value="1"/>
</dbReference>
<dbReference type="FunFam" id="3.60.110.10:FF:000011">
    <property type="entry name" value="Cyanide hydratase"/>
    <property type="match status" value="1"/>
</dbReference>
<dbReference type="Gene3D" id="3.60.110.10">
    <property type="entry name" value="Carbon-nitrogen hydrolase"/>
    <property type="match status" value="1"/>
</dbReference>
<dbReference type="HAMAP" id="MF_03224">
    <property type="entry name" value="CN_hydrolase"/>
    <property type="match status" value="1"/>
</dbReference>
<dbReference type="InterPro" id="IPR003010">
    <property type="entry name" value="C-N_Hydrolase"/>
</dbReference>
<dbReference type="InterPro" id="IPR036526">
    <property type="entry name" value="C-N_Hydrolase_sf"/>
</dbReference>
<dbReference type="InterPro" id="IPR037544">
    <property type="entry name" value="CN_hydrolase"/>
</dbReference>
<dbReference type="InterPro" id="IPR000132">
    <property type="entry name" value="Nitrilase/CN_hydratase_CS"/>
</dbReference>
<dbReference type="InterPro" id="IPR044149">
    <property type="entry name" value="Nitrilases_CHs"/>
</dbReference>
<dbReference type="PANTHER" id="PTHR46044:SF4">
    <property type="entry name" value="CYANIDE HYDRATASE"/>
    <property type="match status" value="1"/>
</dbReference>
<dbReference type="PANTHER" id="PTHR46044">
    <property type="entry name" value="NITRILASE"/>
    <property type="match status" value="1"/>
</dbReference>
<dbReference type="Pfam" id="PF00795">
    <property type="entry name" value="CN_hydrolase"/>
    <property type="match status" value="1"/>
</dbReference>
<dbReference type="SUPFAM" id="SSF56317">
    <property type="entry name" value="Carbon-nitrogen hydrolase"/>
    <property type="match status" value="1"/>
</dbReference>
<dbReference type="PROSITE" id="PS50263">
    <property type="entry name" value="CN_HYDROLASE"/>
    <property type="match status" value="1"/>
</dbReference>
<dbReference type="PROSITE" id="PS00920">
    <property type="entry name" value="NITRIL_CHT_1"/>
    <property type="match status" value="1"/>
</dbReference>
<dbReference type="PROSITE" id="PS00921">
    <property type="entry name" value="NITRIL_CHT_2"/>
    <property type="match status" value="1"/>
</dbReference>
<feature type="chain" id="PRO_0000440036" description="Cyanide hydratase">
    <location>
        <begin position="1"/>
        <end position="366"/>
    </location>
</feature>
<feature type="domain" description="CN hydrolase" evidence="2">
    <location>
        <begin position="6"/>
        <end position="285"/>
    </location>
</feature>
<feature type="active site" description="Proton acceptor" evidence="2">
    <location>
        <position position="46"/>
    </location>
</feature>
<feature type="active site" evidence="2">
    <location>
        <position position="128"/>
    </location>
</feature>
<feature type="active site" description="Nucleophile" evidence="2">
    <location>
        <position position="163"/>
    </location>
</feature>
<gene>
    <name evidence="4" type="primary">chy</name>
    <name evidence="4" type="synonym">NitPt</name>
    <name type="ORF">PTT_13066</name>
</gene>
<evidence type="ECO:0000255" key="1">
    <source>
        <dbReference type="HAMAP-Rule" id="MF_03224"/>
    </source>
</evidence>
<evidence type="ECO:0000255" key="2">
    <source>
        <dbReference type="PROSITE-ProRule" id="PRU00054"/>
    </source>
</evidence>
<evidence type="ECO:0000269" key="3">
    <source>
    </source>
</evidence>
<evidence type="ECO:0000303" key="4">
    <source>
    </source>
</evidence>
<proteinExistence type="evidence at protein level"/>
<reference key="1">
    <citation type="journal article" date="2016" name="Appl. Microbiol. Biotechnol.">
        <title>Bringing nitrilase sequences from databases to life: the search for novel substrate specificities with a focus on dinitriles.</title>
        <authorList>
            <person name="Vesela A.B."/>
            <person name="Rucka L."/>
            <person name="Kaplan O."/>
            <person name="Pelantova H."/>
            <person name="Nesvera J."/>
            <person name="Patek M."/>
            <person name="Martinkova L."/>
        </authorList>
    </citation>
    <scope>NUCLEOTIDE SEQUENCE [GENOMIC DNA]</scope>
    <scope>FUNCTION</scope>
    <scope>CATALYTIC ACTIVITY</scope>
</reference>
<reference key="2">
    <citation type="journal article" date="2010" name="Genome Biol.">
        <title>A first genome assembly of the barley fungal pathogen Pyrenophora teres f. teres.</title>
        <authorList>
            <person name="Ellwood S.R."/>
            <person name="Liu Z."/>
            <person name="Syme R.A."/>
            <person name="Lai Z."/>
            <person name="Hane J.K."/>
            <person name="Keiper F."/>
            <person name="Moffat C.S."/>
            <person name="Oliver R.P."/>
            <person name="Friesen T.L."/>
        </authorList>
    </citation>
    <scope>NUCLEOTIDE SEQUENCE [LARGE SCALE GENOMIC DNA]</scope>
    <source>
        <strain>0-1</strain>
    </source>
</reference>
<name>CHT_PYRTT</name>
<keyword id="KW-0378">Hydrolase</keyword>
<keyword id="KW-0456">Lyase</keyword>
<keyword id="KW-1185">Reference proteome</keyword>
<protein>
    <recommendedName>
        <fullName evidence="1 4">Cyanide hydratase</fullName>
        <shortName evidence="1 4">CHT</shortName>
        <ecNumber evidence="1 3">4.2.1.66</ecNumber>
    </recommendedName>
    <alternativeName>
        <fullName evidence="1">Cyanide-degrading nitrilase</fullName>
    </alternativeName>
    <alternativeName>
        <fullName evidence="1">Formamide hydrolyase</fullName>
    </alternativeName>
    <alternativeName>
        <fullName evidence="4">NitPt</fullName>
    </alternativeName>
</protein>